<gene>
    <name evidence="1" type="primary">rpoA</name>
    <name type="ordered locus">LACR_2375</name>
</gene>
<dbReference type="EC" id="2.7.7.6" evidence="1"/>
<dbReference type="EMBL" id="CP000425">
    <property type="protein sequence ID" value="ABJ73821.1"/>
    <property type="molecule type" value="Genomic_DNA"/>
</dbReference>
<dbReference type="RefSeq" id="WP_011677148.1">
    <property type="nucleotide sequence ID" value="NC_008527.1"/>
</dbReference>
<dbReference type="SMR" id="Q02W51"/>
<dbReference type="KEGG" id="llc:LACR_2375"/>
<dbReference type="HOGENOM" id="CLU_053084_0_1_9"/>
<dbReference type="Proteomes" id="UP000000240">
    <property type="component" value="Chromosome"/>
</dbReference>
<dbReference type="GO" id="GO:0005737">
    <property type="term" value="C:cytoplasm"/>
    <property type="evidence" value="ECO:0007669"/>
    <property type="project" value="UniProtKB-ARBA"/>
</dbReference>
<dbReference type="GO" id="GO:0000428">
    <property type="term" value="C:DNA-directed RNA polymerase complex"/>
    <property type="evidence" value="ECO:0007669"/>
    <property type="project" value="UniProtKB-KW"/>
</dbReference>
<dbReference type="GO" id="GO:0003677">
    <property type="term" value="F:DNA binding"/>
    <property type="evidence" value="ECO:0007669"/>
    <property type="project" value="UniProtKB-UniRule"/>
</dbReference>
<dbReference type="GO" id="GO:0003899">
    <property type="term" value="F:DNA-directed RNA polymerase activity"/>
    <property type="evidence" value="ECO:0007669"/>
    <property type="project" value="UniProtKB-UniRule"/>
</dbReference>
<dbReference type="GO" id="GO:0046983">
    <property type="term" value="F:protein dimerization activity"/>
    <property type="evidence" value="ECO:0007669"/>
    <property type="project" value="InterPro"/>
</dbReference>
<dbReference type="GO" id="GO:0006351">
    <property type="term" value="P:DNA-templated transcription"/>
    <property type="evidence" value="ECO:0007669"/>
    <property type="project" value="UniProtKB-UniRule"/>
</dbReference>
<dbReference type="CDD" id="cd06928">
    <property type="entry name" value="RNAP_alpha_NTD"/>
    <property type="match status" value="1"/>
</dbReference>
<dbReference type="FunFam" id="2.170.120.12:FF:000001">
    <property type="entry name" value="DNA-directed RNA polymerase subunit alpha"/>
    <property type="match status" value="1"/>
</dbReference>
<dbReference type="Gene3D" id="1.10.150.20">
    <property type="entry name" value="5' to 3' exonuclease, C-terminal subdomain"/>
    <property type="match status" value="1"/>
</dbReference>
<dbReference type="Gene3D" id="2.170.120.12">
    <property type="entry name" value="DNA-directed RNA polymerase, insert domain"/>
    <property type="match status" value="1"/>
</dbReference>
<dbReference type="Gene3D" id="3.30.1360.10">
    <property type="entry name" value="RNA polymerase, RBP11-like subunit"/>
    <property type="match status" value="1"/>
</dbReference>
<dbReference type="HAMAP" id="MF_00059">
    <property type="entry name" value="RNApol_bact_RpoA"/>
    <property type="match status" value="1"/>
</dbReference>
<dbReference type="InterPro" id="IPR011262">
    <property type="entry name" value="DNA-dir_RNA_pol_insert"/>
</dbReference>
<dbReference type="InterPro" id="IPR011263">
    <property type="entry name" value="DNA-dir_RNA_pol_RpoA/D/Rpb3"/>
</dbReference>
<dbReference type="InterPro" id="IPR011773">
    <property type="entry name" value="DNA-dir_RpoA"/>
</dbReference>
<dbReference type="InterPro" id="IPR036603">
    <property type="entry name" value="RBP11-like"/>
</dbReference>
<dbReference type="InterPro" id="IPR011260">
    <property type="entry name" value="RNAP_asu_C"/>
</dbReference>
<dbReference type="InterPro" id="IPR036643">
    <property type="entry name" value="RNApol_insert_sf"/>
</dbReference>
<dbReference type="NCBIfam" id="NF003513">
    <property type="entry name" value="PRK05182.1-2"/>
    <property type="match status" value="1"/>
</dbReference>
<dbReference type="NCBIfam" id="NF003515">
    <property type="entry name" value="PRK05182.2-1"/>
    <property type="match status" value="1"/>
</dbReference>
<dbReference type="NCBIfam" id="NF003518">
    <property type="entry name" value="PRK05182.2-4"/>
    <property type="match status" value="1"/>
</dbReference>
<dbReference type="NCBIfam" id="NF003519">
    <property type="entry name" value="PRK05182.2-5"/>
    <property type="match status" value="1"/>
</dbReference>
<dbReference type="NCBIfam" id="TIGR02027">
    <property type="entry name" value="rpoA"/>
    <property type="match status" value="1"/>
</dbReference>
<dbReference type="Pfam" id="PF01000">
    <property type="entry name" value="RNA_pol_A_bac"/>
    <property type="match status" value="1"/>
</dbReference>
<dbReference type="Pfam" id="PF03118">
    <property type="entry name" value="RNA_pol_A_CTD"/>
    <property type="match status" value="1"/>
</dbReference>
<dbReference type="Pfam" id="PF01193">
    <property type="entry name" value="RNA_pol_L"/>
    <property type="match status" value="1"/>
</dbReference>
<dbReference type="SMART" id="SM00662">
    <property type="entry name" value="RPOLD"/>
    <property type="match status" value="1"/>
</dbReference>
<dbReference type="SUPFAM" id="SSF47789">
    <property type="entry name" value="C-terminal domain of RNA polymerase alpha subunit"/>
    <property type="match status" value="1"/>
</dbReference>
<dbReference type="SUPFAM" id="SSF56553">
    <property type="entry name" value="Insert subdomain of RNA polymerase alpha subunit"/>
    <property type="match status" value="1"/>
</dbReference>
<dbReference type="SUPFAM" id="SSF55257">
    <property type="entry name" value="RBP11-like subunits of RNA polymerase"/>
    <property type="match status" value="1"/>
</dbReference>
<protein>
    <recommendedName>
        <fullName evidence="1">DNA-directed RNA polymerase subunit alpha</fullName>
        <shortName evidence="1">RNAP subunit alpha</shortName>
        <ecNumber evidence="1">2.7.7.6</ecNumber>
    </recommendedName>
    <alternativeName>
        <fullName evidence="1">RNA polymerase subunit alpha</fullName>
    </alternativeName>
    <alternativeName>
        <fullName evidence="1">Transcriptase subunit alpha</fullName>
    </alternativeName>
</protein>
<name>RPOA_LACLS</name>
<reference key="1">
    <citation type="journal article" date="2006" name="Proc. Natl. Acad. Sci. U.S.A.">
        <title>Comparative genomics of the lactic acid bacteria.</title>
        <authorList>
            <person name="Makarova K.S."/>
            <person name="Slesarev A."/>
            <person name="Wolf Y.I."/>
            <person name="Sorokin A."/>
            <person name="Mirkin B."/>
            <person name="Koonin E.V."/>
            <person name="Pavlov A."/>
            <person name="Pavlova N."/>
            <person name="Karamychev V."/>
            <person name="Polouchine N."/>
            <person name="Shakhova V."/>
            <person name="Grigoriev I."/>
            <person name="Lou Y."/>
            <person name="Rohksar D."/>
            <person name="Lucas S."/>
            <person name="Huang K."/>
            <person name="Goodstein D.M."/>
            <person name="Hawkins T."/>
            <person name="Plengvidhya V."/>
            <person name="Welker D."/>
            <person name="Hughes J."/>
            <person name="Goh Y."/>
            <person name="Benson A."/>
            <person name="Baldwin K."/>
            <person name="Lee J.-H."/>
            <person name="Diaz-Muniz I."/>
            <person name="Dosti B."/>
            <person name="Smeianov V."/>
            <person name="Wechter W."/>
            <person name="Barabote R."/>
            <person name="Lorca G."/>
            <person name="Altermann E."/>
            <person name="Barrangou R."/>
            <person name="Ganesan B."/>
            <person name="Xie Y."/>
            <person name="Rawsthorne H."/>
            <person name="Tamir D."/>
            <person name="Parker C."/>
            <person name="Breidt F."/>
            <person name="Broadbent J.R."/>
            <person name="Hutkins R."/>
            <person name="O'Sullivan D."/>
            <person name="Steele J."/>
            <person name="Unlu G."/>
            <person name="Saier M.H. Jr."/>
            <person name="Klaenhammer T."/>
            <person name="Richardson P."/>
            <person name="Kozyavkin S."/>
            <person name="Weimer B.C."/>
            <person name="Mills D.A."/>
        </authorList>
    </citation>
    <scope>NUCLEOTIDE SEQUENCE [LARGE SCALE GENOMIC DNA]</scope>
    <source>
        <strain>SK11</strain>
    </source>
</reference>
<feature type="chain" id="PRO_0000296825" description="DNA-directed RNA polymerase subunit alpha">
    <location>
        <begin position="1"/>
        <end position="312"/>
    </location>
</feature>
<feature type="region of interest" description="Alpha N-terminal domain (alpha-NTD)" evidence="1">
    <location>
        <begin position="1"/>
        <end position="226"/>
    </location>
</feature>
<feature type="region of interest" description="Alpha C-terminal domain (alpha-CTD)" evidence="1">
    <location>
        <begin position="243"/>
        <end position="312"/>
    </location>
</feature>
<sequence>MIEFEKPKITKFDESENYGKFVVEPLERGYGTTLGNSLRRVLLSSLPGAAVTSIQIEGVQHEFATIPGVREDVIQIVLAVKGIAIKSYVESEKQIELDVTGPMDVTAGDILTDSDIEIVNKDHYLFSIAEGHSMRAVMTVKKGYGYVPADENKVDGAPIGTIAVDSIYTPVSKVNYQVEPARVGGDSSYDKLTLEITTNGTIVSDEALSLSAKILTDHLNLFVDLSEVAAEAETLVVKDEVKTERVLDKIIEEMDFSVRAYNGLKRAGINTVTDIVEMSEADMIKVKNLGHKSVEEVKVKLTELGLSLKKRK</sequence>
<evidence type="ECO:0000255" key="1">
    <source>
        <dbReference type="HAMAP-Rule" id="MF_00059"/>
    </source>
</evidence>
<organism>
    <name type="scientific">Lactococcus lactis subsp. cremoris (strain SK11)</name>
    <dbReference type="NCBI Taxonomy" id="272622"/>
    <lineage>
        <taxon>Bacteria</taxon>
        <taxon>Bacillati</taxon>
        <taxon>Bacillota</taxon>
        <taxon>Bacilli</taxon>
        <taxon>Lactobacillales</taxon>
        <taxon>Streptococcaceae</taxon>
        <taxon>Lactococcus</taxon>
        <taxon>Lactococcus cremoris subsp. cremoris</taxon>
    </lineage>
</organism>
<proteinExistence type="inferred from homology"/>
<accession>Q02W51</accession>
<keyword id="KW-0240">DNA-directed RNA polymerase</keyword>
<keyword id="KW-0548">Nucleotidyltransferase</keyword>
<keyword id="KW-0804">Transcription</keyword>
<keyword id="KW-0808">Transferase</keyword>
<comment type="function">
    <text evidence="1">DNA-dependent RNA polymerase catalyzes the transcription of DNA into RNA using the four ribonucleoside triphosphates as substrates.</text>
</comment>
<comment type="catalytic activity">
    <reaction evidence="1">
        <text>RNA(n) + a ribonucleoside 5'-triphosphate = RNA(n+1) + diphosphate</text>
        <dbReference type="Rhea" id="RHEA:21248"/>
        <dbReference type="Rhea" id="RHEA-COMP:14527"/>
        <dbReference type="Rhea" id="RHEA-COMP:17342"/>
        <dbReference type="ChEBI" id="CHEBI:33019"/>
        <dbReference type="ChEBI" id="CHEBI:61557"/>
        <dbReference type="ChEBI" id="CHEBI:140395"/>
        <dbReference type="EC" id="2.7.7.6"/>
    </reaction>
</comment>
<comment type="subunit">
    <text evidence="1">Homodimer. The RNAP catalytic core consists of 2 alpha, 1 beta, 1 beta' and 1 omega subunit. When a sigma factor is associated with the core the holoenzyme is formed, which can initiate transcription.</text>
</comment>
<comment type="domain">
    <text evidence="1">The N-terminal domain is essential for RNAP assembly and basal transcription, whereas the C-terminal domain is involved in interaction with transcriptional regulators and with upstream promoter elements.</text>
</comment>
<comment type="similarity">
    <text evidence="1">Belongs to the RNA polymerase alpha chain family.</text>
</comment>